<accession>C0QVZ7</accession>
<name>RL4_BRAHW</name>
<dbReference type="EMBL" id="CP001357">
    <property type="protein sequence ID" value="ACN84583.1"/>
    <property type="molecule type" value="Genomic_DNA"/>
</dbReference>
<dbReference type="RefSeq" id="WP_012671620.1">
    <property type="nucleotide sequence ID" value="NC_012225.1"/>
</dbReference>
<dbReference type="SMR" id="C0QVZ7"/>
<dbReference type="STRING" id="565034.BHWA1_02125"/>
<dbReference type="GeneID" id="63963277"/>
<dbReference type="KEGG" id="bhy:BHWA1_02125"/>
<dbReference type="eggNOG" id="COG0088">
    <property type="taxonomic scope" value="Bacteria"/>
</dbReference>
<dbReference type="HOGENOM" id="CLU_041575_5_2_12"/>
<dbReference type="Proteomes" id="UP000001803">
    <property type="component" value="Chromosome"/>
</dbReference>
<dbReference type="GO" id="GO:1990904">
    <property type="term" value="C:ribonucleoprotein complex"/>
    <property type="evidence" value="ECO:0007669"/>
    <property type="project" value="UniProtKB-KW"/>
</dbReference>
<dbReference type="GO" id="GO:0005840">
    <property type="term" value="C:ribosome"/>
    <property type="evidence" value="ECO:0007669"/>
    <property type="project" value="UniProtKB-KW"/>
</dbReference>
<dbReference type="GO" id="GO:0019843">
    <property type="term" value="F:rRNA binding"/>
    <property type="evidence" value="ECO:0007669"/>
    <property type="project" value="UniProtKB-UniRule"/>
</dbReference>
<dbReference type="GO" id="GO:0003735">
    <property type="term" value="F:structural constituent of ribosome"/>
    <property type="evidence" value="ECO:0007669"/>
    <property type="project" value="InterPro"/>
</dbReference>
<dbReference type="GO" id="GO:0006412">
    <property type="term" value="P:translation"/>
    <property type="evidence" value="ECO:0007669"/>
    <property type="project" value="UniProtKB-UniRule"/>
</dbReference>
<dbReference type="Gene3D" id="3.40.1370.10">
    <property type="match status" value="1"/>
</dbReference>
<dbReference type="HAMAP" id="MF_01328_B">
    <property type="entry name" value="Ribosomal_uL4_B"/>
    <property type="match status" value="1"/>
</dbReference>
<dbReference type="InterPro" id="IPR002136">
    <property type="entry name" value="Ribosomal_uL4"/>
</dbReference>
<dbReference type="InterPro" id="IPR013005">
    <property type="entry name" value="Ribosomal_uL4-like"/>
</dbReference>
<dbReference type="InterPro" id="IPR023574">
    <property type="entry name" value="Ribosomal_uL4_dom_sf"/>
</dbReference>
<dbReference type="NCBIfam" id="TIGR03953">
    <property type="entry name" value="rplD_bact"/>
    <property type="match status" value="1"/>
</dbReference>
<dbReference type="PANTHER" id="PTHR10746">
    <property type="entry name" value="50S RIBOSOMAL PROTEIN L4"/>
    <property type="match status" value="1"/>
</dbReference>
<dbReference type="PANTHER" id="PTHR10746:SF6">
    <property type="entry name" value="LARGE RIBOSOMAL SUBUNIT PROTEIN UL4M"/>
    <property type="match status" value="1"/>
</dbReference>
<dbReference type="Pfam" id="PF00573">
    <property type="entry name" value="Ribosomal_L4"/>
    <property type="match status" value="1"/>
</dbReference>
<dbReference type="SUPFAM" id="SSF52166">
    <property type="entry name" value="Ribosomal protein L4"/>
    <property type="match status" value="1"/>
</dbReference>
<comment type="function">
    <text evidence="1">One of the primary rRNA binding proteins, this protein initially binds near the 5'-end of the 23S rRNA. It is important during the early stages of 50S assembly. It makes multiple contacts with different domains of the 23S rRNA in the assembled 50S subunit and ribosome.</text>
</comment>
<comment type="function">
    <text evidence="1">Forms part of the polypeptide exit tunnel.</text>
</comment>
<comment type="subunit">
    <text evidence="1">Part of the 50S ribosomal subunit.</text>
</comment>
<comment type="similarity">
    <text evidence="1">Belongs to the universal ribosomal protein uL4 family.</text>
</comment>
<proteinExistence type="inferred from homology"/>
<gene>
    <name evidence="1" type="primary">rplD</name>
    <name type="ordered locus">BHWA1_02125</name>
</gene>
<feature type="chain" id="PRO_1000165989" description="Large ribosomal subunit protein uL4">
    <location>
        <begin position="1"/>
        <end position="215"/>
    </location>
</feature>
<feature type="region of interest" description="Disordered" evidence="2">
    <location>
        <begin position="43"/>
        <end position="97"/>
    </location>
</feature>
<evidence type="ECO:0000255" key="1">
    <source>
        <dbReference type="HAMAP-Rule" id="MF_01328"/>
    </source>
</evidence>
<evidence type="ECO:0000256" key="2">
    <source>
        <dbReference type="SAM" id="MobiDB-lite"/>
    </source>
</evidence>
<evidence type="ECO:0000305" key="3"/>
<keyword id="KW-0687">Ribonucleoprotein</keyword>
<keyword id="KW-0689">Ribosomal protein</keyword>
<keyword id="KW-0694">RNA-binding</keyword>
<keyword id="KW-0699">rRNA-binding</keyword>
<reference key="1">
    <citation type="journal article" date="2009" name="PLoS ONE">
        <title>Genome sequence of the pathogenic intestinal spirochete Brachyspira hyodysenteriae reveals adaptations to its lifestyle in the porcine large intestine.</title>
        <authorList>
            <person name="Bellgard M.I."/>
            <person name="Wanchanthuek P."/>
            <person name="La T."/>
            <person name="Ryan K."/>
            <person name="Moolhuijzen P."/>
            <person name="Albertyn Z."/>
            <person name="Shaban B."/>
            <person name="Motro Y."/>
            <person name="Dunn D.S."/>
            <person name="Schibeci D."/>
            <person name="Hunter A."/>
            <person name="Barrero R."/>
            <person name="Phillips N.D."/>
            <person name="Hampson D.J."/>
        </authorList>
    </citation>
    <scope>NUCLEOTIDE SEQUENCE [LARGE SCALE GENOMIC DNA]</scope>
    <source>
        <strain>ATCC 49526 / WA1</strain>
    </source>
</reference>
<sequence>MEVVILNENGDSVGNLEIVDEIFKSEVNNNLLYEAIKNELANRRQGTHSTKTRAEVSGGGKKPWRQKGTGRARAGSTRSPIWVGGGKTHTPKPRDYSYRLPKKMKRKALLSVLSLKYGSNVLKVFEDFTFDAPKTKRMASFISKVKEPNTRKVAFVVGKDESLGDNYNKLLLSLRNIKDLKLVNADSMSIHPLFYADEVYFTKTALSKLNARIKG</sequence>
<organism>
    <name type="scientific">Brachyspira hyodysenteriae (strain ATCC 49526 / WA1)</name>
    <dbReference type="NCBI Taxonomy" id="565034"/>
    <lineage>
        <taxon>Bacteria</taxon>
        <taxon>Pseudomonadati</taxon>
        <taxon>Spirochaetota</taxon>
        <taxon>Spirochaetia</taxon>
        <taxon>Brachyspirales</taxon>
        <taxon>Brachyspiraceae</taxon>
        <taxon>Brachyspira</taxon>
    </lineage>
</organism>
<protein>
    <recommendedName>
        <fullName evidence="1">Large ribosomal subunit protein uL4</fullName>
    </recommendedName>
    <alternativeName>
        <fullName evidence="3">50S ribosomal protein L4</fullName>
    </alternativeName>
</protein>